<protein>
    <recommendedName>
        <fullName evidence="1">Peptide chain release factor 3</fullName>
        <shortName evidence="1">RF-3</shortName>
    </recommendedName>
</protein>
<name>RF3_CYAP4</name>
<comment type="function">
    <text evidence="1">Increases the formation of ribosomal termination complexes and stimulates activities of RF-1 and RF-2. It binds guanine nucleotides and has strong preference for UGA stop codons. It may interact directly with the ribosome. The stimulation of RF-1 and RF-2 is significantly reduced by GTP and GDP, but not by GMP.</text>
</comment>
<comment type="subcellular location">
    <subcellularLocation>
        <location evidence="1">Cytoplasm</location>
    </subcellularLocation>
</comment>
<comment type="similarity">
    <text evidence="1">Belongs to the TRAFAC class translation factor GTPase superfamily. Classic translation factor GTPase family. PrfC subfamily.</text>
</comment>
<sequence length="542" mass="61175">MTTDLQAELETEVERRRNFAIISHPDAGKTTLTEKLLLYGGAIHEAGAVKARRAQRHATSDWMEMEQQRGISITSTVLQFEYQGYQINLLDTPGHQDFSEDTYRTLAAADNAVMLVDAAKGLEPQTRKLFEVCKLRSLPIFTFINKLDRPGREPLDLLDEIEKELGLQTYAVNWPIGMGDRFKGVYDRRLQQIHLFERTAHGKREARDTIVDLGDPQIEALLDQDLYFQLKDDLELIEGLGPELDLEAVHQGKMTPIFFGSAMTNFGVELFLNAFLDYALKPATYRSSQGAIAPTHEDFSGFVFKLQANMDPKHRDRVAFVRVCAGKFEKDMTVNHARTGKMIRLSRPQKLFAQGRESLETAYAGDVIGLNNPGVFAIGDTIYSGQKLEYEGIPCFSPELFAYLRNPNPSKFKQFQKGVSELREEGAVQIMYSVDESKREPILAAVGQLQFEVVQFRLQNEYGVETRIELLPYTVARWVVEGWPALEAVGRIFNAVTVKDSWGRPVLLFKNEWNAQQVLADHPKLKLSGIAPVVSGQQPEAL</sequence>
<proteinExistence type="inferred from homology"/>
<keyword id="KW-0963">Cytoplasm</keyword>
<keyword id="KW-0342">GTP-binding</keyword>
<keyword id="KW-0547">Nucleotide-binding</keyword>
<keyword id="KW-0648">Protein biosynthesis</keyword>
<accession>B8HY03</accession>
<feature type="chain" id="PRO_1000193517" description="Peptide chain release factor 3">
    <location>
        <begin position="1"/>
        <end position="542"/>
    </location>
</feature>
<feature type="domain" description="tr-type G">
    <location>
        <begin position="14"/>
        <end position="283"/>
    </location>
</feature>
<feature type="binding site" evidence="1">
    <location>
        <begin position="23"/>
        <end position="30"/>
    </location>
    <ligand>
        <name>GTP</name>
        <dbReference type="ChEBI" id="CHEBI:37565"/>
    </ligand>
</feature>
<feature type="binding site" evidence="1">
    <location>
        <begin position="91"/>
        <end position="95"/>
    </location>
    <ligand>
        <name>GTP</name>
        <dbReference type="ChEBI" id="CHEBI:37565"/>
    </ligand>
</feature>
<feature type="binding site" evidence="1">
    <location>
        <begin position="145"/>
        <end position="148"/>
    </location>
    <ligand>
        <name>GTP</name>
        <dbReference type="ChEBI" id="CHEBI:37565"/>
    </ligand>
</feature>
<gene>
    <name evidence="1" type="primary">prfC</name>
    <name type="ordered locus">Cyan7425_1056</name>
</gene>
<reference key="1">
    <citation type="journal article" date="2011" name="MBio">
        <title>Novel metabolic attributes of the genus Cyanothece, comprising a group of unicellular nitrogen-fixing Cyanobacteria.</title>
        <authorList>
            <person name="Bandyopadhyay A."/>
            <person name="Elvitigala T."/>
            <person name="Welsh E."/>
            <person name="Stockel J."/>
            <person name="Liberton M."/>
            <person name="Min H."/>
            <person name="Sherman L.A."/>
            <person name="Pakrasi H.B."/>
        </authorList>
    </citation>
    <scope>NUCLEOTIDE SEQUENCE [LARGE SCALE GENOMIC DNA]</scope>
    <source>
        <strain>PCC 7425 / ATCC 29141</strain>
    </source>
</reference>
<organism>
    <name type="scientific">Cyanothece sp. (strain PCC 7425 / ATCC 29141)</name>
    <dbReference type="NCBI Taxonomy" id="395961"/>
    <lineage>
        <taxon>Bacteria</taxon>
        <taxon>Bacillati</taxon>
        <taxon>Cyanobacteriota</taxon>
        <taxon>Cyanophyceae</taxon>
        <taxon>Gomontiellales</taxon>
        <taxon>Cyanothecaceae</taxon>
        <taxon>Cyanothece</taxon>
    </lineage>
</organism>
<dbReference type="EMBL" id="CP001344">
    <property type="protein sequence ID" value="ACL43442.1"/>
    <property type="molecule type" value="Genomic_DNA"/>
</dbReference>
<dbReference type="SMR" id="B8HY03"/>
<dbReference type="STRING" id="395961.Cyan7425_1056"/>
<dbReference type="KEGG" id="cyn:Cyan7425_1056"/>
<dbReference type="eggNOG" id="COG4108">
    <property type="taxonomic scope" value="Bacteria"/>
</dbReference>
<dbReference type="HOGENOM" id="CLU_002794_2_1_3"/>
<dbReference type="OrthoDB" id="9804431at2"/>
<dbReference type="GO" id="GO:0005829">
    <property type="term" value="C:cytosol"/>
    <property type="evidence" value="ECO:0007669"/>
    <property type="project" value="TreeGrafter"/>
</dbReference>
<dbReference type="GO" id="GO:0005525">
    <property type="term" value="F:GTP binding"/>
    <property type="evidence" value="ECO:0007669"/>
    <property type="project" value="UniProtKB-UniRule"/>
</dbReference>
<dbReference type="GO" id="GO:0003924">
    <property type="term" value="F:GTPase activity"/>
    <property type="evidence" value="ECO:0007669"/>
    <property type="project" value="InterPro"/>
</dbReference>
<dbReference type="GO" id="GO:0016150">
    <property type="term" value="F:translation release factor activity, codon nonspecific"/>
    <property type="evidence" value="ECO:0007669"/>
    <property type="project" value="TreeGrafter"/>
</dbReference>
<dbReference type="GO" id="GO:0016149">
    <property type="term" value="F:translation release factor activity, codon specific"/>
    <property type="evidence" value="ECO:0007669"/>
    <property type="project" value="UniProtKB-UniRule"/>
</dbReference>
<dbReference type="GO" id="GO:0006449">
    <property type="term" value="P:regulation of translational termination"/>
    <property type="evidence" value="ECO:0007669"/>
    <property type="project" value="UniProtKB-UniRule"/>
</dbReference>
<dbReference type="CDD" id="cd04169">
    <property type="entry name" value="RF3"/>
    <property type="match status" value="1"/>
</dbReference>
<dbReference type="CDD" id="cd03689">
    <property type="entry name" value="RF3_II"/>
    <property type="match status" value="1"/>
</dbReference>
<dbReference type="FunFam" id="2.40.30.10:FF:000040">
    <property type="entry name" value="Peptide chain release factor 3"/>
    <property type="match status" value="1"/>
</dbReference>
<dbReference type="FunFam" id="3.30.70.3280:FF:000001">
    <property type="entry name" value="Peptide chain release factor 3"/>
    <property type="match status" value="1"/>
</dbReference>
<dbReference type="FunFam" id="3.40.50.300:FF:000542">
    <property type="entry name" value="Peptide chain release factor 3"/>
    <property type="match status" value="1"/>
</dbReference>
<dbReference type="Gene3D" id="3.40.50.300">
    <property type="entry name" value="P-loop containing nucleotide triphosphate hydrolases"/>
    <property type="match status" value="1"/>
</dbReference>
<dbReference type="Gene3D" id="3.30.70.3280">
    <property type="entry name" value="Peptide chain release factor 3, domain III"/>
    <property type="match status" value="1"/>
</dbReference>
<dbReference type="Gene3D" id="2.40.30.10">
    <property type="entry name" value="Translation factors"/>
    <property type="match status" value="1"/>
</dbReference>
<dbReference type="HAMAP" id="MF_00072">
    <property type="entry name" value="Rel_fac_3"/>
    <property type="match status" value="1"/>
</dbReference>
<dbReference type="InterPro" id="IPR053905">
    <property type="entry name" value="EF-G-like_DII"/>
</dbReference>
<dbReference type="InterPro" id="IPR035647">
    <property type="entry name" value="EFG_III/V"/>
</dbReference>
<dbReference type="InterPro" id="IPR031157">
    <property type="entry name" value="G_TR_CS"/>
</dbReference>
<dbReference type="InterPro" id="IPR027417">
    <property type="entry name" value="P-loop_NTPase"/>
</dbReference>
<dbReference type="InterPro" id="IPR004548">
    <property type="entry name" value="PrfC"/>
</dbReference>
<dbReference type="InterPro" id="IPR032090">
    <property type="entry name" value="RF3_C"/>
</dbReference>
<dbReference type="InterPro" id="IPR038467">
    <property type="entry name" value="RF3_dom_3_sf"/>
</dbReference>
<dbReference type="InterPro" id="IPR041732">
    <property type="entry name" value="RF3_GTP-bd"/>
</dbReference>
<dbReference type="InterPro" id="IPR005225">
    <property type="entry name" value="Small_GTP-bd"/>
</dbReference>
<dbReference type="InterPro" id="IPR000795">
    <property type="entry name" value="T_Tr_GTP-bd_dom"/>
</dbReference>
<dbReference type="InterPro" id="IPR009000">
    <property type="entry name" value="Transl_B-barrel_sf"/>
</dbReference>
<dbReference type="NCBIfam" id="TIGR00503">
    <property type="entry name" value="prfC"/>
    <property type="match status" value="1"/>
</dbReference>
<dbReference type="NCBIfam" id="NF001964">
    <property type="entry name" value="PRK00741.1"/>
    <property type="match status" value="1"/>
</dbReference>
<dbReference type="NCBIfam" id="TIGR00231">
    <property type="entry name" value="small_GTP"/>
    <property type="match status" value="1"/>
</dbReference>
<dbReference type="PANTHER" id="PTHR43556">
    <property type="entry name" value="PEPTIDE CHAIN RELEASE FACTOR RF3"/>
    <property type="match status" value="1"/>
</dbReference>
<dbReference type="PANTHER" id="PTHR43556:SF2">
    <property type="entry name" value="PEPTIDE CHAIN RELEASE FACTOR RF3"/>
    <property type="match status" value="1"/>
</dbReference>
<dbReference type="Pfam" id="PF22042">
    <property type="entry name" value="EF-G_D2"/>
    <property type="match status" value="1"/>
</dbReference>
<dbReference type="Pfam" id="PF00009">
    <property type="entry name" value="GTP_EFTU"/>
    <property type="match status" value="1"/>
</dbReference>
<dbReference type="Pfam" id="PF16658">
    <property type="entry name" value="RF3_C"/>
    <property type="match status" value="1"/>
</dbReference>
<dbReference type="PRINTS" id="PR00315">
    <property type="entry name" value="ELONGATNFCT"/>
</dbReference>
<dbReference type="SUPFAM" id="SSF54980">
    <property type="entry name" value="EF-G C-terminal domain-like"/>
    <property type="match status" value="1"/>
</dbReference>
<dbReference type="SUPFAM" id="SSF52540">
    <property type="entry name" value="P-loop containing nucleoside triphosphate hydrolases"/>
    <property type="match status" value="1"/>
</dbReference>
<dbReference type="SUPFAM" id="SSF50447">
    <property type="entry name" value="Translation proteins"/>
    <property type="match status" value="1"/>
</dbReference>
<dbReference type="PROSITE" id="PS00301">
    <property type="entry name" value="G_TR_1"/>
    <property type="match status" value="1"/>
</dbReference>
<dbReference type="PROSITE" id="PS51722">
    <property type="entry name" value="G_TR_2"/>
    <property type="match status" value="1"/>
</dbReference>
<evidence type="ECO:0000255" key="1">
    <source>
        <dbReference type="HAMAP-Rule" id="MF_00072"/>
    </source>
</evidence>